<protein>
    <recommendedName>
        <fullName evidence="1">Glucose-1-phosphate adenylyltransferase</fullName>
        <ecNumber evidence="1">2.7.7.27</ecNumber>
    </recommendedName>
    <alternativeName>
        <fullName evidence="1">ADP-glucose pyrophosphorylase</fullName>
        <shortName evidence="1">ADPGlc PPase</shortName>
    </alternativeName>
    <alternativeName>
        <fullName evidence="1">ADP-glucose synthase</fullName>
    </alternativeName>
</protein>
<sequence>MREAPHVLGIVLAGGEGKRLYPLTADRAKPAVPFGGAYRLIDFVLSNLVNARYLRICVLTQYKSHSLDRHISQNWRLSGLAGEYITPVPAQQRLGPRWYTGSADAIYQSLNLIYDEDPDYIVVFGADHVYRMDPEQMVRFHIDSGAGVTVAGIRVPRADASAFGCIDADDAGTIRDFVEKPLEPPGTPDDPTSTFVSMGNYVFTTKVLIDAIRADADDDHSDHDMGGDIIPRLVADGMAAVYDFSNNEVPGATDRDRAYWRDVGTLDAFYDAHMDLVSVHPVFNLYNKRWPIRGESENLAPAKFVNGGSAQESVVGAGSIISAASVRNSVLSSNVVVEDGAIVEGSVIMPGARVGRGAVVRHAILDKNVVVGPGEMVGVDLDKDRERFAISAGGVVAVGKGVWI</sequence>
<dbReference type="EC" id="2.7.7.27" evidence="1"/>
<dbReference type="EMBL" id="CP000854">
    <property type="protein sequence ID" value="ACC42633.1"/>
    <property type="molecule type" value="Genomic_DNA"/>
</dbReference>
<dbReference type="RefSeq" id="WP_012395797.1">
    <property type="nucleotide sequence ID" value="NC_010612.1"/>
</dbReference>
<dbReference type="SMR" id="B2HS55"/>
<dbReference type="STRING" id="216594.MMAR_4225"/>
<dbReference type="GeneID" id="34341240"/>
<dbReference type="KEGG" id="mmi:MMAR_4225"/>
<dbReference type="eggNOG" id="COG0448">
    <property type="taxonomic scope" value="Bacteria"/>
</dbReference>
<dbReference type="HOGENOM" id="CLU_029499_14_1_11"/>
<dbReference type="OrthoDB" id="9801810at2"/>
<dbReference type="UniPathway" id="UPA00164"/>
<dbReference type="UniPathway" id="UPA00934"/>
<dbReference type="Proteomes" id="UP000001190">
    <property type="component" value="Chromosome"/>
</dbReference>
<dbReference type="GO" id="GO:0005524">
    <property type="term" value="F:ATP binding"/>
    <property type="evidence" value="ECO:0007669"/>
    <property type="project" value="UniProtKB-KW"/>
</dbReference>
<dbReference type="GO" id="GO:0008878">
    <property type="term" value="F:glucose-1-phosphate adenylyltransferase activity"/>
    <property type="evidence" value="ECO:0007669"/>
    <property type="project" value="UniProtKB-UniRule"/>
</dbReference>
<dbReference type="GO" id="GO:0045227">
    <property type="term" value="P:capsule polysaccharide biosynthetic process"/>
    <property type="evidence" value="ECO:0007669"/>
    <property type="project" value="UniProtKB-UniPathway"/>
</dbReference>
<dbReference type="GO" id="GO:0005978">
    <property type="term" value="P:glycogen biosynthetic process"/>
    <property type="evidence" value="ECO:0007669"/>
    <property type="project" value="UniProtKB-UniRule"/>
</dbReference>
<dbReference type="CDD" id="cd02508">
    <property type="entry name" value="ADP_Glucose_PP"/>
    <property type="match status" value="1"/>
</dbReference>
<dbReference type="CDD" id="cd04651">
    <property type="entry name" value="LbH_G1P_AT_C"/>
    <property type="match status" value="1"/>
</dbReference>
<dbReference type="FunFam" id="2.160.10.10:FF:000020">
    <property type="entry name" value="Glucose-1-phosphate adenylyltransferase"/>
    <property type="match status" value="1"/>
</dbReference>
<dbReference type="FunFam" id="3.90.550.10:FF:000014">
    <property type="entry name" value="Glucose-1-phosphate adenylyltransferase"/>
    <property type="match status" value="1"/>
</dbReference>
<dbReference type="Gene3D" id="2.160.10.10">
    <property type="entry name" value="Hexapeptide repeat proteins"/>
    <property type="match status" value="1"/>
</dbReference>
<dbReference type="Gene3D" id="3.90.550.10">
    <property type="entry name" value="Spore Coat Polysaccharide Biosynthesis Protein SpsA, Chain A"/>
    <property type="match status" value="1"/>
</dbReference>
<dbReference type="HAMAP" id="MF_00624">
    <property type="entry name" value="GlgC"/>
    <property type="match status" value="1"/>
</dbReference>
<dbReference type="InterPro" id="IPR011831">
    <property type="entry name" value="ADP-Glc_PPase"/>
</dbReference>
<dbReference type="InterPro" id="IPR005836">
    <property type="entry name" value="ADP_Glu_pyroP_CS"/>
</dbReference>
<dbReference type="InterPro" id="IPR023049">
    <property type="entry name" value="GlgC_bac"/>
</dbReference>
<dbReference type="InterPro" id="IPR056818">
    <property type="entry name" value="GlmU/GlgC-like_hexapep"/>
</dbReference>
<dbReference type="InterPro" id="IPR005835">
    <property type="entry name" value="NTP_transferase_dom"/>
</dbReference>
<dbReference type="InterPro" id="IPR029044">
    <property type="entry name" value="Nucleotide-diphossugar_trans"/>
</dbReference>
<dbReference type="InterPro" id="IPR011004">
    <property type="entry name" value="Trimer_LpxA-like_sf"/>
</dbReference>
<dbReference type="NCBIfam" id="TIGR02091">
    <property type="entry name" value="glgC"/>
    <property type="match status" value="1"/>
</dbReference>
<dbReference type="NCBIfam" id="NF001947">
    <property type="entry name" value="PRK00725.1"/>
    <property type="match status" value="1"/>
</dbReference>
<dbReference type="NCBIfam" id="NF002023">
    <property type="entry name" value="PRK00844.1"/>
    <property type="match status" value="1"/>
</dbReference>
<dbReference type="PANTHER" id="PTHR43523:SF2">
    <property type="entry name" value="GLUCOSE-1-PHOSPHATE ADENYLYLTRANSFERASE"/>
    <property type="match status" value="1"/>
</dbReference>
<dbReference type="PANTHER" id="PTHR43523">
    <property type="entry name" value="GLUCOSE-1-PHOSPHATE ADENYLYLTRANSFERASE-RELATED"/>
    <property type="match status" value="1"/>
</dbReference>
<dbReference type="Pfam" id="PF24894">
    <property type="entry name" value="Hexapep_GlmU"/>
    <property type="match status" value="1"/>
</dbReference>
<dbReference type="Pfam" id="PF00483">
    <property type="entry name" value="NTP_transferase"/>
    <property type="match status" value="1"/>
</dbReference>
<dbReference type="SUPFAM" id="SSF53448">
    <property type="entry name" value="Nucleotide-diphospho-sugar transferases"/>
    <property type="match status" value="1"/>
</dbReference>
<dbReference type="SUPFAM" id="SSF51161">
    <property type="entry name" value="Trimeric LpxA-like enzymes"/>
    <property type="match status" value="1"/>
</dbReference>
<dbReference type="PROSITE" id="PS00808">
    <property type="entry name" value="ADP_GLC_PYROPHOSPH_1"/>
    <property type="match status" value="1"/>
</dbReference>
<dbReference type="PROSITE" id="PS00809">
    <property type="entry name" value="ADP_GLC_PYROPHOSPH_2"/>
    <property type="match status" value="1"/>
</dbReference>
<dbReference type="PROSITE" id="PS00810">
    <property type="entry name" value="ADP_GLC_PYROPHOSPH_3"/>
    <property type="match status" value="1"/>
</dbReference>
<reference key="1">
    <citation type="journal article" date="2008" name="Genome Res.">
        <title>Insights from the complete genome sequence of Mycobacterium marinum on the evolution of Mycobacterium tuberculosis.</title>
        <authorList>
            <person name="Stinear T.P."/>
            <person name="Seemann T."/>
            <person name="Harrison P.F."/>
            <person name="Jenkin G.A."/>
            <person name="Davies J.K."/>
            <person name="Johnson P.D."/>
            <person name="Abdellah Z."/>
            <person name="Arrowsmith C."/>
            <person name="Chillingworth T."/>
            <person name="Churcher C."/>
            <person name="Clarke K."/>
            <person name="Cronin A."/>
            <person name="Davis P."/>
            <person name="Goodhead I."/>
            <person name="Holroyd N."/>
            <person name="Jagels K."/>
            <person name="Lord A."/>
            <person name="Moule S."/>
            <person name="Mungall K."/>
            <person name="Norbertczak H."/>
            <person name="Quail M.A."/>
            <person name="Rabbinowitsch E."/>
            <person name="Walker D."/>
            <person name="White B."/>
            <person name="Whitehead S."/>
            <person name="Small P.L."/>
            <person name="Brosch R."/>
            <person name="Ramakrishnan L."/>
            <person name="Fischbach M.A."/>
            <person name="Parkhill J."/>
            <person name="Cole S.T."/>
        </authorList>
    </citation>
    <scope>NUCLEOTIDE SEQUENCE [LARGE SCALE GENOMIC DNA]</scope>
    <source>
        <strain>ATCC BAA-535 / M</strain>
    </source>
</reference>
<keyword id="KW-0067">ATP-binding</keyword>
<keyword id="KW-0119">Carbohydrate metabolism</keyword>
<keyword id="KW-0320">Glycogen biosynthesis</keyword>
<keyword id="KW-0321">Glycogen metabolism</keyword>
<keyword id="KW-0547">Nucleotide-binding</keyword>
<keyword id="KW-0548">Nucleotidyltransferase</keyword>
<keyword id="KW-1185">Reference proteome</keyword>
<keyword id="KW-0808">Transferase</keyword>
<feature type="chain" id="PRO_1000130492" description="Glucose-1-phosphate adenylyltransferase">
    <location>
        <begin position="1"/>
        <end position="404"/>
    </location>
</feature>
<feature type="binding site" evidence="1">
    <location>
        <position position="99"/>
    </location>
    <ligand>
        <name>alpha-D-glucose 1-phosphate</name>
        <dbReference type="ChEBI" id="CHEBI:58601"/>
    </ligand>
</feature>
<feature type="binding site" evidence="1">
    <location>
        <position position="164"/>
    </location>
    <ligand>
        <name>alpha-D-glucose 1-phosphate</name>
        <dbReference type="ChEBI" id="CHEBI:58601"/>
    </ligand>
</feature>
<feature type="binding site" evidence="1">
    <location>
        <begin position="179"/>
        <end position="180"/>
    </location>
    <ligand>
        <name>alpha-D-glucose 1-phosphate</name>
        <dbReference type="ChEBI" id="CHEBI:58601"/>
    </ligand>
</feature>
<feature type="binding site" evidence="1">
    <location>
        <position position="197"/>
    </location>
    <ligand>
        <name>alpha-D-glucose 1-phosphate</name>
        <dbReference type="ChEBI" id="CHEBI:58601"/>
    </ligand>
</feature>
<organism>
    <name type="scientific">Mycobacterium marinum (strain ATCC BAA-535 / M)</name>
    <dbReference type="NCBI Taxonomy" id="216594"/>
    <lineage>
        <taxon>Bacteria</taxon>
        <taxon>Bacillati</taxon>
        <taxon>Actinomycetota</taxon>
        <taxon>Actinomycetes</taxon>
        <taxon>Mycobacteriales</taxon>
        <taxon>Mycobacteriaceae</taxon>
        <taxon>Mycobacterium</taxon>
        <taxon>Mycobacterium ulcerans group</taxon>
    </lineage>
</organism>
<comment type="function">
    <text evidence="1">Involved in the biosynthesis of ADP-glucose, a building block, required in the biosynthesis of maltose-1-phosphate (M1P) and in the elongation reactions to produce linear alpha-1,4-glucans. Catalyzes the reaction between ATP and alpha-D-glucose 1-phosphate (G1P) to produce pyrophosphate and ADP-Glc.</text>
</comment>
<comment type="catalytic activity">
    <reaction evidence="1">
        <text>alpha-D-glucose 1-phosphate + ATP + H(+) = ADP-alpha-D-glucose + diphosphate</text>
        <dbReference type="Rhea" id="RHEA:12120"/>
        <dbReference type="ChEBI" id="CHEBI:15378"/>
        <dbReference type="ChEBI" id="CHEBI:30616"/>
        <dbReference type="ChEBI" id="CHEBI:33019"/>
        <dbReference type="ChEBI" id="CHEBI:57498"/>
        <dbReference type="ChEBI" id="CHEBI:58601"/>
        <dbReference type="EC" id="2.7.7.27"/>
    </reaction>
</comment>
<comment type="pathway">
    <text evidence="2">Capsule biogenesis; capsule polysaccharide biosynthesis.</text>
</comment>
<comment type="pathway">
    <text evidence="1">Glycan biosynthesis; glycogen biosynthesis.</text>
</comment>
<comment type="similarity">
    <text evidence="1">Belongs to the bacterial/plant glucose-1-phosphate adenylyltransferase family.</text>
</comment>
<accession>B2HS55</accession>
<gene>
    <name evidence="1" type="primary">glgC</name>
    <name type="ordered locus">MMAR_4225</name>
</gene>
<evidence type="ECO:0000255" key="1">
    <source>
        <dbReference type="HAMAP-Rule" id="MF_00624"/>
    </source>
</evidence>
<evidence type="ECO:0000305" key="2"/>
<proteinExistence type="inferred from homology"/>
<name>GLGC_MYCMM</name>